<comment type="function">
    <text evidence="1 5">Probably acts as a selective Mg(2+) transporter (By similarity). Plays a role in cell wall integrity and in engulfment by host macrophages (PubMed:26087349).</text>
</comment>
<comment type="catalytic activity">
    <reaction evidence="1">
        <text>Mg(2+)(in) = Mg(2+)(out)</text>
        <dbReference type="Rhea" id="RHEA:29827"/>
        <dbReference type="ChEBI" id="CHEBI:18420"/>
    </reaction>
</comment>
<comment type="subcellular location">
    <subcellularLocation>
        <location evidence="1">Cell membrane</location>
        <topology evidence="3">Multi-pass membrane protein</topology>
    </subcellularLocation>
    <subcellularLocation>
        <location evidence="2">Early endosome</location>
    </subcellularLocation>
    <text evidence="2">Recruited to the cell membrane in response to low extracellular magnesium.</text>
</comment>
<comment type="disruption phenotype">
    <text evidence="5">Leads to sensitivity to both calcofluor white and Congo red.</text>
</comment>
<comment type="similarity">
    <text evidence="6">Belongs to the NIPA family.</text>
</comment>
<keyword id="KW-1003">Cell membrane</keyword>
<keyword id="KW-0967">Endosome</keyword>
<keyword id="KW-0325">Glycoprotein</keyword>
<keyword id="KW-0406">Ion transport</keyword>
<keyword id="KW-0460">Magnesium</keyword>
<keyword id="KW-0472">Membrane</keyword>
<keyword id="KW-1185">Reference proteome</keyword>
<keyword id="KW-0812">Transmembrane</keyword>
<keyword id="KW-1133">Transmembrane helix</keyword>
<keyword id="KW-0813">Transport</keyword>
<keyword id="KW-0843">Virulence</keyword>
<accession>Q5A5P7</accession>
<organism>
    <name type="scientific">Candida albicans (strain SC5314 / ATCC MYA-2876)</name>
    <name type="common">Yeast</name>
    <dbReference type="NCBI Taxonomy" id="237561"/>
    <lineage>
        <taxon>Eukaryota</taxon>
        <taxon>Fungi</taxon>
        <taxon>Dikarya</taxon>
        <taxon>Ascomycota</taxon>
        <taxon>Saccharomycotina</taxon>
        <taxon>Pichiomycetes</taxon>
        <taxon>Debaryomycetaceae</taxon>
        <taxon>Candida/Lodderomyces clade</taxon>
        <taxon>Candida</taxon>
    </lineage>
</organism>
<gene>
    <name type="ordered locus">CAALFM_C210720CA</name>
    <name type="ordered locus">orf19.12812</name>
</gene>
<dbReference type="EMBL" id="CP017624">
    <property type="protein sequence ID" value="AOW28040.1"/>
    <property type="molecule type" value="Genomic_DNA"/>
</dbReference>
<dbReference type="RefSeq" id="XP_717155.1">
    <property type="nucleotide sequence ID" value="XM_712062.1"/>
</dbReference>
<dbReference type="STRING" id="237561.Q5A5P7"/>
<dbReference type="EnsemblFungi" id="C2_10720C_A-T">
    <property type="protein sequence ID" value="C2_10720C_A-T-p1"/>
    <property type="gene ID" value="C2_10720C_A"/>
</dbReference>
<dbReference type="GeneID" id="3641209"/>
<dbReference type="KEGG" id="cal:CAALFM_C210720CA"/>
<dbReference type="CGD" id="CAL0000195400">
    <property type="gene designation" value="orf19.12812"/>
</dbReference>
<dbReference type="VEuPathDB" id="FungiDB:C2_10720C_A"/>
<dbReference type="eggNOG" id="KOG2922">
    <property type="taxonomic scope" value="Eukaryota"/>
</dbReference>
<dbReference type="HOGENOM" id="CLU_012349_0_0_1"/>
<dbReference type="InParanoid" id="Q5A5P7"/>
<dbReference type="OMA" id="PMVYISI"/>
<dbReference type="OrthoDB" id="6428174at2759"/>
<dbReference type="PHI-base" id="PHI:4891"/>
<dbReference type="Proteomes" id="UP000000559">
    <property type="component" value="Chromosome 2"/>
</dbReference>
<dbReference type="GO" id="GO:0005769">
    <property type="term" value="C:early endosome"/>
    <property type="evidence" value="ECO:0007669"/>
    <property type="project" value="UniProtKB-SubCell"/>
</dbReference>
<dbReference type="GO" id="GO:0016020">
    <property type="term" value="C:membrane"/>
    <property type="evidence" value="ECO:0000318"/>
    <property type="project" value="GO_Central"/>
</dbReference>
<dbReference type="GO" id="GO:0005886">
    <property type="term" value="C:plasma membrane"/>
    <property type="evidence" value="ECO:0007669"/>
    <property type="project" value="UniProtKB-SubCell"/>
</dbReference>
<dbReference type="GO" id="GO:0015095">
    <property type="term" value="F:magnesium ion transmembrane transporter activity"/>
    <property type="evidence" value="ECO:0007669"/>
    <property type="project" value="InterPro"/>
</dbReference>
<dbReference type="GO" id="GO:0015693">
    <property type="term" value="P:magnesium ion transport"/>
    <property type="evidence" value="ECO:0000318"/>
    <property type="project" value="GO_Central"/>
</dbReference>
<dbReference type="InterPro" id="IPR008521">
    <property type="entry name" value="Mg_trans_NIPA"/>
</dbReference>
<dbReference type="PANTHER" id="PTHR12570">
    <property type="match status" value="1"/>
</dbReference>
<dbReference type="PANTHER" id="PTHR12570:SF85">
    <property type="entry name" value="DUF803 DOMAIN MEMBRANE PROTEIN (AFU_ORTHOLOGUE AFUA_1G15880)"/>
    <property type="match status" value="1"/>
</dbReference>
<dbReference type="Pfam" id="PF05653">
    <property type="entry name" value="Mg_trans_NIPA"/>
    <property type="match status" value="1"/>
</dbReference>
<dbReference type="SUPFAM" id="SSF103481">
    <property type="entry name" value="Multidrug resistance efflux transporter EmrE"/>
    <property type="match status" value="1"/>
</dbReference>
<feature type="chain" id="PRO_0000459480" description="Probable magnesium transporter">
    <location>
        <begin position="1"/>
        <end position="368"/>
    </location>
</feature>
<feature type="topological domain" description="Extracellular" evidence="6">
    <location>
        <begin position="1"/>
        <end position="4"/>
    </location>
</feature>
<feature type="transmembrane region" description="Helical" evidence="3">
    <location>
        <begin position="5"/>
        <end position="25"/>
    </location>
</feature>
<feature type="topological domain" description="Cytoplasmic" evidence="6">
    <location>
        <begin position="26"/>
        <end position="50"/>
    </location>
</feature>
<feature type="transmembrane region" description="Helical" evidence="3">
    <location>
        <begin position="51"/>
        <end position="71"/>
    </location>
</feature>
<feature type="topological domain" description="Extracellular" evidence="6">
    <location>
        <begin position="72"/>
        <end position="76"/>
    </location>
</feature>
<feature type="transmembrane region" description="Helical" evidence="3">
    <location>
        <begin position="77"/>
        <end position="97"/>
    </location>
</feature>
<feature type="topological domain" description="Cytoplasmic" evidence="6">
    <location>
        <begin position="98"/>
        <end position="101"/>
    </location>
</feature>
<feature type="transmembrane region" description="Helical" evidence="3">
    <location>
        <begin position="102"/>
        <end position="122"/>
    </location>
</feature>
<feature type="topological domain" description="Extracellular" evidence="6">
    <location>
        <begin position="123"/>
        <end position="143"/>
    </location>
</feature>
<feature type="transmembrane region" description="Helical" evidence="3">
    <location>
        <begin position="144"/>
        <end position="164"/>
    </location>
</feature>
<feature type="topological domain" description="Cytoplasmic" evidence="6">
    <location>
        <begin position="165"/>
        <end position="175"/>
    </location>
</feature>
<feature type="transmembrane region" description="Helical" evidence="3">
    <location>
        <begin position="176"/>
        <end position="196"/>
    </location>
</feature>
<feature type="topological domain" description="Extracellular" evidence="6">
    <location>
        <begin position="197"/>
        <end position="206"/>
    </location>
</feature>
<feature type="transmembrane region" description="Helical" evidence="3">
    <location>
        <begin position="207"/>
        <end position="227"/>
    </location>
</feature>
<feature type="topological domain" description="Cytoplasmic" evidence="6">
    <location>
        <begin position="228"/>
        <end position="240"/>
    </location>
</feature>
<feature type="transmembrane region" description="Helical" evidence="3">
    <location>
        <begin position="241"/>
        <end position="261"/>
    </location>
</feature>
<feature type="topological domain" description="Extracellular" evidence="6">
    <location>
        <begin position="262"/>
        <end position="269"/>
    </location>
</feature>
<feature type="transmembrane region" description="Helical" evidence="3">
    <location>
        <begin position="270"/>
        <end position="290"/>
    </location>
</feature>
<feature type="topological domain" description="Cytoplasmic" evidence="6">
    <location>
        <begin position="291"/>
        <end position="368"/>
    </location>
</feature>
<feature type="glycosylation site" description="N-linked (GlcNAc...) asparagine" evidence="4">
    <location>
        <position position="266"/>
    </location>
</feature>
<name>NIPA2_CANAL</name>
<evidence type="ECO:0000250" key="1">
    <source>
        <dbReference type="UniProtKB" id="Q8N8Q9"/>
    </source>
</evidence>
<evidence type="ECO:0000250" key="2">
    <source>
        <dbReference type="UniProtKB" id="Q9JJC8"/>
    </source>
</evidence>
<evidence type="ECO:0000255" key="3"/>
<evidence type="ECO:0000255" key="4">
    <source>
        <dbReference type="PROSITE-ProRule" id="PRU00498"/>
    </source>
</evidence>
<evidence type="ECO:0000269" key="5">
    <source>
    </source>
</evidence>
<evidence type="ECO:0000305" key="6"/>
<sequence>MEDKYIGLALAMSSSLAIGTSFIITKKGLMDASARTGGTDGVQASDYLQNPIWWGGMITMAIGEIANFAAYTFAPAILVTPLGALSVIIGAVLAAIFLKERLGTLGKMGCAICLMGSVIIILHAPPDKEVQTVDEILGYATQPGFMFYCTVVTLYSLFMIYKIVPKYGNTNPMIYLSICSSVGSISVMSIKAFGIALKLTLGGNNQFTHVSTYLFLIVVALCIVTQMNYFNKALDQFDTSIVNPLYYVTFTTFTLAASFILFKGFNTSSAVDIISLLIGFLIIFSGVYLLNISRSESPMVDRDREIFGVHTSKDMAPLDNGVGGFSTVRRSMQINRTSEYDNEESVGLRRFDSFEIDSGDEDTRNYRH</sequence>
<protein>
    <recommendedName>
        <fullName evidence="1">Probable magnesium transporter</fullName>
    </recommendedName>
</protein>
<reference key="1">
    <citation type="journal article" date="2004" name="Proc. Natl. Acad. Sci. U.S.A.">
        <title>The diploid genome sequence of Candida albicans.</title>
        <authorList>
            <person name="Jones T."/>
            <person name="Federspiel N.A."/>
            <person name="Chibana H."/>
            <person name="Dungan J."/>
            <person name="Kalman S."/>
            <person name="Magee B.B."/>
            <person name="Newport G."/>
            <person name="Thorstenson Y.R."/>
            <person name="Agabian N."/>
            <person name="Magee P.T."/>
            <person name="Davis R.W."/>
            <person name="Scherer S."/>
        </authorList>
    </citation>
    <scope>NUCLEOTIDE SEQUENCE [LARGE SCALE GENOMIC DNA]</scope>
    <source>
        <strain>SC5314 / ATCC MYA-2876</strain>
    </source>
</reference>
<reference key="2">
    <citation type="journal article" date="2007" name="Genome Biol.">
        <title>Assembly of the Candida albicans genome into sixteen supercontigs aligned on the eight chromosomes.</title>
        <authorList>
            <person name="van het Hoog M."/>
            <person name="Rast T.J."/>
            <person name="Martchenko M."/>
            <person name="Grindle S."/>
            <person name="Dignard D."/>
            <person name="Hogues H."/>
            <person name="Cuomo C."/>
            <person name="Berriman M."/>
            <person name="Scherer S."/>
            <person name="Magee B.B."/>
            <person name="Whiteway M."/>
            <person name="Chibana H."/>
            <person name="Nantel A."/>
            <person name="Magee P.T."/>
        </authorList>
    </citation>
    <scope>GENOME REANNOTATION</scope>
    <source>
        <strain>SC5314 / ATCC MYA-2876</strain>
    </source>
</reference>
<reference key="3">
    <citation type="journal article" date="2013" name="Genome Biol.">
        <title>Assembly of a phased diploid Candida albicans genome facilitates allele-specific measurements and provides a simple model for repeat and indel structure.</title>
        <authorList>
            <person name="Muzzey D."/>
            <person name="Schwartz K."/>
            <person name="Weissman J.S."/>
            <person name="Sherlock G."/>
        </authorList>
    </citation>
    <scope>NUCLEOTIDE SEQUENCE [LARGE SCALE GENOMIC DNA]</scope>
    <scope>GENOME REANNOTATION</scope>
    <source>
        <strain>SC5314 / ATCC MYA-2876</strain>
    </source>
</reference>
<reference key="4">
    <citation type="journal article" date="2015" name="J. Proteomics">
        <title>Candida albicans cell shaving uncovers new proteins involved in cell wall integrity, yeast to hypha transition, stress response and host-pathogen interaction.</title>
        <authorList>
            <person name="Gil-Bona A."/>
            <person name="Parra-Giraldo C.M."/>
            <person name="Hernaez M.L."/>
            <person name="Reales-Calderon J.A."/>
            <person name="Solis N.V."/>
            <person name="Filler S.G."/>
            <person name="Monteoliva L."/>
            <person name="Gil C."/>
        </authorList>
    </citation>
    <scope>FUNCTION</scope>
    <scope>DISRUPTION PHENOTYPE</scope>
</reference>
<proteinExistence type="inferred from homology"/>